<keyword id="KW-0687">Ribonucleoprotein</keyword>
<keyword id="KW-0689">Ribosomal protein</keyword>
<name>RL14E_PYRHO</name>
<reference key="1">
    <citation type="journal article" date="1998" name="DNA Res.">
        <title>Complete sequence and gene organization of the genome of a hyper-thermophilic archaebacterium, Pyrococcus horikoshii OT3.</title>
        <authorList>
            <person name="Kawarabayasi Y."/>
            <person name="Sawada M."/>
            <person name="Horikawa H."/>
            <person name="Haikawa Y."/>
            <person name="Hino Y."/>
            <person name="Yamamoto S."/>
            <person name="Sekine M."/>
            <person name="Baba S."/>
            <person name="Kosugi H."/>
            <person name="Hosoyama A."/>
            <person name="Nagai Y."/>
            <person name="Sakai M."/>
            <person name="Ogura K."/>
            <person name="Otsuka R."/>
            <person name="Nakazawa H."/>
            <person name="Takamiya M."/>
            <person name="Ohfuku Y."/>
            <person name="Funahashi T."/>
            <person name="Tanaka T."/>
            <person name="Kudoh Y."/>
            <person name="Yamazaki J."/>
            <person name="Kushida N."/>
            <person name="Oguchi A."/>
            <person name="Aoki K."/>
            <person name="Yoshizawa T."/>
            <person name="Nakamura Y."/>
            <person name="Robb F.T."/>
            <person name="Horikoshi K."/>
            <person name="Masuchi Y."/>
            <person name="Shizuya H."/>
            <person name="Kikuchi H."/>
        </authorList>
    </citation>
    <scope>NUCLEOTIDE SEQUENCE [LARGE SCALE GENOMIC DNA]</scope>
    <source>
        <strain>ATCC 700860 / DSM 12428 / JCM 9974 / NBRC 100139 / OT-3</strain>
    </source>
</reference>
<proteinExistence type="inferred from homology"/>
<sequence length="82" mass="8898">MPAIDVGRIAVIIAGRRAGQKCVIVDIIDKNFVLVTGAGLNKVKRRRMNIKHLEPLPEKIDIPRGASDEEVKAALEKAGISL</sequence>
<protein>
    <recommendedName>
        <fullName evidence="1">Large ribosomal subunit protein eL14</fullName>
    </recommendedName>
    <alternativeName>
        <fullName evidence="2">50S ribosomal protein L14e</fullName>
    </alternativeName>
</protein>
<evidence type="ECO:0000255" key="1">
    <source>
        <dbReference type="HAMAP-Rule" id="MF_00721"/>
    </source>
</evidence>
<evidence type="ECO:0000305" key="2"/>
<gene>
    <name evidence="1" type="primary">rpl14e</name>
    <name type="ordered locus">PH1266.1</name>
</gene>
<accession>P59937</accession>
<dbReference type="EMBL" id="BA000001">
    <property type="status" value="NOT_ANNOTATED_CDS"/>
    <property type="molecule type" value="Genomic_DNA"/>
</dbReference>
<dbReference type="RefSeq" id="WP_010868268.1">
    <property type="nucleotide sequence ID" value="NC_000961.1"/>
</dbReference>
<dbReference type="SMR" id="P59937"/>
<dbReference type="OrthoDB" id="63594at2157"/>
<dbReference type="Proteomes" id="UP000000752">
    <property type="component" value="Chromosome"/>
</dbReference>
<dbReference type="GO" id="GO:0022625">
    <property type="term" value="C:cytosolic large ribosomal subunit"/>
    <property type="evidence" value="ECO:0007669"/>
    <property type="project" value="TreeGrafter"/>
</dbReference>
<dbReference type="GO" id="GO:0003723">
    <property type="term" value="F:RNA binding"/>
    <property type="evidence" value="ECO:0007669"/>
    <property type="project" value="InterPro"/>
</dbReference>
<dbReference type="GO" id="GO:0003735">
    <property type="term" value="F:structural constituent of ribosome"/>
    <property type="evidence" value="ECO:0007669"/>
    <property type="project" value="InterPro"/>
</dbReference>
<dbReference type="GO" id="GO:0042273">
    <property type="term" value="P:ribosomal large subunit biogenesis"/>
    <property type="evidence" value="ECO:0007669"/>
    <property type="project" value="TreeGrafter"/>
</dbReference>
<dbReference type="GO" id="GO:0006412">
    <property type="term" value="P:translation"/>
    <property type="evidence" value="ECO:0007669"/>
    <property type="project" value="UniProtKB-UniRule"/>
</dbReference>
<dbReference type="CDD" id="cd06088">
    <property type="entry name" value="KOW_RPL14"/>
    <property type="match status" value="1"/>
</dbReference>
<dbReference type="FunFam" id="2.30.30.30:FF:000045">
    <property type="entry name" value="50S ribosomal protein L14e"/>
    <property type="match status" value="1"/>
</dbReference>
<dbReference type="Gene3D" id="2.30.30.30">
    <property type="match status" value="1"/>
</dbReference>
<dbReference type="HAMAP" id="MF_00721">
    <property type="entry name" value="Ribosomal_eL14"/>
    <property type="match status" value="1"/>
</dbReference>
<dbReference type="InterPro" id="IPR005824">
    <property type="entry name" value="KOW"/>
</dbReference>
<dbReference type="InterPro" id="IPR014722">
    <property type="entry name" value="Rib_uL2_dom2"/>
</dbReference>
<dbReference type="InterPro" id="IPR039660">
    <property type="entry name" value="Ribosomal_eL14"/>
</dbReference>
<dbReference type="InterPro" id="IPR023651">
    <property type="entry name" value="Ribosomal_eL14_arc"/>
</dbReference>
<dbReference type="InterPro" id="IPR041985">
    <property type="entry name" value="Ribosomal_eL14_KOW"/>
</dbReference>
<dbReference type="InterPro" id="IPR008991">
    <property type="entry name" value="Translation_prot_SH3-like_sf"/>
</dbReference>
<dbReference type="NCBIfam" id="NF003320">
    <property type="entry name" value="PRK04333.1"/>
    <property type="match status" value="1"/>
</dbReference>
<dbReference type="PANTHER" id="PTHR11127">
    <property type="entry name" value="60S RIBOSOMAL PROTEIN L14"/>
    <property type="match status" value="1"/>
</dbReference>
<dbReference type="PANTHER" id="PTHR11127:SF2">
    <property type="entry name" value="LARGE RIBOSOMAL SUBUNIT PROTEIN EL14"/>
    <property type="match status" value="1"/>
</dbReference>
<dbReference type="Pfam" id="PF00467">
    <property type="entry name" value="KOW"/>
    <property type="match status" value="1"/>
</dbReference>
<dbReference type="SUPFAM" id="SSF50104">
    <property type="entry name" value="Translation proteins SH3-like domain"/>
    <property type="match status" value="1"/>
</dbReference>
<organism>
    <name type="scientific">Pyrococcus horikoshii (strain ATCC 700860 / DSM 12428 / JCM 9974 / NBRC 100139 / OT-3)</name>
    <dbReference type="NCBI Taxonomy" id="70601"/>
    <lineage>
        <taxon>Archaea</taxon>
        <taxon>Methanobacteriati</taxon>
        <taxon>Methanobacteriota</taxon>
        <taxon>Thermococci</taxon>
        <taxon>Thermococcales</taxon>
        <taxon>Thermococcaceae</taxon>
        <taxon>Pyrococcus</taxon>
    </lineage>
</organism>
<comment type="similarity">
    <text evidence="1">Belongs to the eukaryotic ribosomal protein eL14 family.</text>
</comment>
<feature type="chain" id="PRO_0000132053" description="Large ribosomal subunit protein eL14">
    <location>
        <begin position="1"/>
        <end position="82"/>
    </location>
</feature>